<comment type="function">
    <text evidence="1">One of several proteins that assist in the late maturation steps of the functional core of the 30S ribosomal subunit. Associates with free 30S ribosomal subunits (but not with 30S subunits that are part of 70S ribosomes or polysomes). Required for efficient processing of 16S rRNA. May interact with the 5'-terminal helix region of 16S rRNA.</text>
</comment>
<comment type="subunit">
    <text evidence="1">Monomer. Binds 30S ribosomal subunits, but not 50S ribosomal subunits or 70S ribosomes.</text>
</comment>
<comment type="subcellular location">
    <subcellularLocation>
        <location evidence="1">Cytoplasm</location>
    </subcellularLocation>
</comment>
<comment type="similarity">
    <text evidence="1">Belongs to the RbfA family.</text>
</comment>
<accession>Q895J7</accession>
<evidence type="ECO:0000255" key="1">
    <source>
        <dbReference type="HAMAP-Rule" id="MF_00003"/>
    </source>
</evidence>
<keyword id="KW-0963">Cytoplasm</keyword>
<keyword id="KW-1185">Reference proteome</keyword>
<keyword id="KW-0690">Ribosome biogenesis</keyword>
<protein>
    <recommendedName>
        <fullName evidence="1">Ribosome-binding factor A</fullName>
    </recommendedName>
</protein>
<proteinExistence type="inferred from homology"/>
<organism>
    <name type="scientific">Clostridium tetani (strain Massachusetts / E88)</name>
    <dbReference type="NCBI Taxonomy" id="212717"/>
    <lineage>
        <taxon>Bacteria</taxon>
        <taxon>Bacillati</taxon>
        <taxon>Bacillota</taxon>
        <taxon>Clostridia</taxon>
        <taxon>Eubacteriales</taxon>
        <taxon>Clostridiaceae</taxon>
        <taxon>Clostridium</taxon>
    </lineage>
</organism>
<feature type="chain" id="PRO_0000102651" description="Ribosome-binding factor A">
    <location>
        <begin position="1"/>
        <end position="121"/>
    </location>
</feature>
<sequence>MAKYRAGRINEEVKKEISSIIRMDLKDPRISAMVSVTKVDVTKDQRYAKVYVSIFGDEKSKEETLEALKSSSGFIRREVGHRIKLRYTPEIIIQNDDSIEHGMHIDSILDKIKENEDHDNK</sequence>
<gene>
    <name evidence="1" type="primary">rbfA</name>
    <name type="ordered locus">CTC_01276</name>
</gene>
<dbReference type="EMBL" id="AE015927">
    <property type="protein sequence ID" value="AAO35843.1"/>
    <property type="molecule type" value="Genomic_DNA"/>
</dbReference>
<dbReference type="RefSeq" id="WP_011099505.1">
    <property type="nucleotide sequence ID" value="NC_004557.1"/>
</dbReference>
<dbReference type="SMR" id="Q895J7"/>
<dbReference type="STRING" id="212717.CTC_01276"/>
<dbReference type="GeneID" id="24252565"/>
<dbReference type="KEGG" id="ctc:CTC_01276"/>
<dbReference type="HOGENOM" id="CLU_089475_6_3_9"/>
<dbReference type="OrthoDB" id="307788at2"/>
<dbReference type="Proteomes" id="UP000001412">
    <property type="component" value="Chromosome"/>
</dbReference>
<dbReference type="GO" id="GO:0005829">
    <property type="term" value="C:cytosol"/>
    <property type="evidence" value="ECO:0007669"/>
    <property type="project" value="TreeGrafter"/>
</dbReference>
<dbReference type="GO" id="GO:0043024">
    <property type="term" value="F:ribosomal small subunit binding"/>
    <property type="evidence" value="ECO:0007669"/>
    <property type="project" value="TreeGrafter"/>
</dbReference>
<dbReference type="GO" id="GO:0030490">
    <property type="term" value="P:maturation of SSU-rRNA"/>
    <property type="evidence" value="ECO:0007669"/>
    <property type="project" value="UniProtKB-UniRule"/>
</dbReference>
<dbReference type="Gene3D" id="3.30.300.20">
    <property type="match status" value="1"/>
</dbReference>
<dbReference type="HAMAP" id="MF_00003">
    <property type="entry name" value="RbfA"/>
    <property type="match status" value="1"/>
</dbReference>
<dbReference type="InterPro" id="IPR015946">
    <property type="entry name" value="KH_dom-like_a/b"/>
</dbReference>
<dbReference type="InterPro" id="IPR000238">
    <property type="entry name" value="RbfA"/>
</dbReference>
<dbReference type="InterPro" id="IPR023799">
    <property type="entry name" value="RbfA_dom_sf"/>
</dbReference>
<dbReference type="InterPro" id="IPR020053">
    <property type="entry name" value="Ribosome-bd_factorA_CS"/>
</dbReference>
<dbReference type="NCBIfam" id="TIGR00082">
    <property type="entry name" value="rbfA"/>
    <property type="match status" value="1"/>
</dbReference>
<dbReference type="PANTHER" id="PTHR33515">
    <property type="entry name" value="RIBOSOME-BINDING FACTOR A, CHLOROPLASTIC-RELATED"/>
    <property type="match status" value="1"/>
</dbReference>
<dbReference type="PANTHER" id="PTHR33515:SF1">
    <property type="entry name" value="RIBOSOME-BINDING FACTOR A, CHLOROPLASTIC-RELATED"/>
    <property type="match status" value="1"/>
</dbReference>
<dbReference type="Pfam" id="PF02033">
    <property type="entry name" value="RBFA"/>
    <property type="match status" value="1"/>
</dbReference>
<dbReference type="SUPFAM" id="SSF89919">
    <property type="entry name" value="Ribosome-binding factor A, RbfA"/>
    <property type="match status" value="1"/>
</dbReference>
<dbReference type="PROSITE" id="PS01319">
    <property type="entry name" value="RBFA"/>
    <property type="match status" value="1"/>
</dbReference>
<reference key="1">
    <citation type="journal article" date="2003" name="Proc. Natl. Acad. Sci. U.S.A.">
        <title>The genome sequence of Clostridium tetani, the causative agent of tetanus disease.</title>
        <authorList>
            <person name="Brueggemann H."/>
            <person name="Baeumer S."/>
            <person name="Fricke W.F."/>
            <person name="Wiezer A."/>
            <person name="Liesegang H."/>
            <person name="Decker I."/>
            <person name="Herzberg C."/>
            <person name="Martinez-Arias R."/>
            <person name="Merkl R."/>
            <person name="Henne A."/>
            <person name="Gottschalk G."/>
        </authorList>
    </citation>
    <scope>NUCLEOTIDE SEQUENCE [LARGE SCALE GENOMIC DNA]</scope>
    <source>
        <strain>Massachusetts / E88</strain>
    </source>
</reference>
<name>RBFA_CLOTE</name>